<dbReference type="EC" id="2.1.1.14" evidence="1"/>
<dbReference type="EMBL" id="AP009324">
    <property type="protein sequence ID" value="BAF77236.1"/>
    <property type="molecule type" value="Genomic_DNA"/>
</dbReference>
<dbReference type="RefSeq" id="WP_000207623.1">
    <property type="nucleotide sequence ID" value="NC_009782.1"/>
</dbReference>
<dbReference type="SMR" id="A7WY46"/>
<dbReference type="KEGG" id="saw:SAHV_0353"/>
<dbReference type="HOGENOM" id="CLU_013175_0_0_9"/>
<dbReference type="UniPathway" id="UPA00051">
    <property type="reaction ID" value="UER00082"/>
</dbReference>
<dbReference type="GO" id="GO:0003871">
    <property type="term" value="F:5-methyltetrahydropteroyltriglutamate-homocysteine S-methyltransferase activity"/>
    <property type="evidence" value="ECO:0007669"/>
    <property type="project" value="UniProtKB-UniRule"/>
</dbReference>
<dbReference type="GO" id="GO:0008270">
    <property type="term" value="F:zinc ion binding"/>
    <property type="evidence" value="ECO:0007669"/>
    <property type="project" value="InterPro"/>
</dbReference>
<dbReference type="GO" id="GO:0009086">
    <property type="term" value="P:methionine biosynthetic process"/>
    <property type="evidence" value="ECO:0007669"/>
    <property type="project" value="UniProtKB-UniRule"/>
</dbReference>
<dbReference type="GO" id="GO:0032259">
    <property type="term" value="P:methylation"/>
    <property type="evidence" value="ECO:0007669"/>
    <property type="project" value="UniProtKB-KW"/>
</dbReference>
<dbReference type="CDD" id="cd03311">
    <property type="entry name" value="CIMS_C_terminal_like"/>
    <property type="match status" value="1"/>
</dbReference>
<dbReference type="CDD" id="cd03312">
    <property type="entry name" value="CIMS_N_terminal_like"/>
    <property type="match status" value="1"/>
</dbReference>
<dbReference type="Gene3D" id="3.20.20.210">
    <property type="match status" value="2"/>
</dbReference>
<dbReference type="HAMAP" id="MF_00172">
    <property type="entry name" value="Meth_synth"/>
    <property type="match status" value="1"/>
</dbReference>
<dbReference type="InterPro" id="IPR013215">
    <property type="entry name" value="Cbl-indep_Met_Synth_N"/>
</dbReference>
<dbReference type="InterPro" id="IPR006276">
    <property type="entry name" value="Cobalamin-indep_Met_synthase"/>
</dbReference>
<dbReference type="InterPro" id="IPR002629">
    <property type="entry name" value="Met_Synth_C/arc"/>
</dbReference>
<dbReference type="InterPro" id="IPR038071">
    <property type="entry name" value="UROD/MetE-like_sf"/>
</dbReference>
<dbReference type="NCBIfam" id="TIGR01371">
    <property type="entry name" value="met_syn_B12ind"/>
    <property type="match status" value="1"/>
</dbReference>
<dbReference type="NCBIfam" id="NF003556">
    <property type="entry name" value="PRK05222.1"/>
    <property type="match status" value="1"/>
</dbReference>
<dbReference type="PANTHER" id="PTHR30519">
    <property type="entry name" value="5-METHYLTETRAHYDROPTEROYLTRIGLUTAMATE--HOMOCYSTEINE METHYLTRANSFERASE"/>
    <property type="match status" value="1"/>
</dbReference>
<dbReference type="Pfam" id="PF08267">
    <property type="entry name" value="Meth_synt_1"/>
    <property type="match status" value="1"/>
</dbReference>
<dbReference type="Pfam" id="PF01717">
    <property type="entry name" value="Meth_synt_2"/>
    <property type="match status" value="1"/>
</dbReference>
<dbReference type="PIRSF" id="PIRSF000382">
    <property type="entry name" value="MeTrfase_B12_ind"/>
    <property type="match status" value="1"/>
</dbReference>
<dbReference type="SUPFAM" id="SSF51726">
    <property type="entry name" value="UROD/MetE-like"/>
    <property type="match status" value="2"/>
</dbReference>
<comment type="function">
    <text evidence="1">Catalyzes the transfer of a methyl group from 5-methyltetrahydrofolate to homocysteine resulting in methionine formation.</text>
</comment>
<comment type="catalytic activity">
    <reaction evidence="1">
        <text>5-methyltetrahydropteroyltri-L-glutamate + L-homocysteine = tetrahydropteroyltri-L-glutamate + L-methionine</text>
        <dbReference type="Rhea" id="RHEA:21196"/>
        <dbReference type="ChEBI" id="CHEBI:57844"/>
        <dbReference type="ChEBI" id="CHEBI:58140"/>
        <dbReference type="ChEBI" id="CHEBI:58199"/>
        <dbReference type="ChEBI" id="CHEBI:58207"/>
        <dbReference type="EC" id="2.1.1.14"/>
    </reaction>
</comment>
<comment type="cofactor">
    <cofactor evidence="1">
        <name>Zn(2+)</name>
        <dbReference type="ChEBI" id="CHEBI:29105"/>
    </cofactor>
    <text evidence="1">Binds 1 zinc ion per subunit.</text>
</comment>
<comment type="pathway">
    <text evidence="1">Amino-acid biosynthesis; L-methionine biosynthesis via de novo pathway; L-methionine from L-homocysteine (MetE route): step 1/1.</text>
</comment>
<comment type="similarity">
    <text evidence="1">Belongs to the vitamin-B12 independent methionine synthase family.</text>
</comment>
<protein>
    <recommendedName>
        <fullName evidence="1">5-methyltetrahydropteroyltriglutamate--homocysteine methyltransferase</fullName>
        <ecNumber evidence="1">2.1.1.14</ecNumber>
    </recommendedName>
    <alternativeName>
        <fullName evidence="1">Cobalamin-independent methionine synthase</fullName>
    </alternativeName>
    <alternativeName>
        <fullName evidence="1">Methionine synthase, vitamin-B12 independent isozyme</fullName>
    </alternativeName>
</protein>
<feature type="chain" id="PRO_1000017277" description="5-methyltetrahydropteroyltriglutamate--homocysteine methyltransferase">
    <location>
        <begin position="1"/>
        <end position="742"/>
    </location>
</feature>
<feature type="active site" description="Proton donor" evidence="1">
    <location>
        <position position="683"/>
    </location>
</feature>
<feature type="binding site" evidence="1">
    <location>
        <begin position="18"/>
        <end position="21"/>
    </location>
    <ligand>
        <name>5-methyltetrahydropteroyltri-L-glutamate</name>
        <dbReference type="ChEBI" id="CHEBI:58207"/>
    </ligand>
</feature>
<feature type="binding site" evidence="1">
    <location>
        <position position="112"/>
    </location>
    <ligand>
        <name>5-methyltetrahydropteroyltri-L-glutamate</name>
        <dbReference type="ChEBI" id="CHEBI:58207"/>
    </ligand>
</feature>
<feature type="binding site" evidence="1">
    <location>
        <begin position="420"/>
        <end position="422"/>
    </location>
    <ligand>
        <name>L-homocysteine</name>
        <dbReference type="ChEBI" id="CHEBI:58199"/>
    </ligand>
</feature>
<feature type="binding site" evidence="1">
    <location>
        <begin position="420"/>
        <end position="422"/>
    </location>
    <ligand>
        <name>L-methionine</name>
        <dbReference type="ChEBI" id="CHEBI:57844"/>
    </ligand>
</feature>
<feature type="binding site" evidence="1">
    <location>
        <position position="473"/>
    </location>
    <ligand>
        <name>L-homocysteine</name>
        <dbReference type="ChEBI" id="CHEBI:58199"/>
    </ligand>
</feature>
<feature type="binding site" evidence="1">
    <location>
        <position position="473"/>
    </location>
    <ligand>
        <name>L-methionine</name>
        <dbReference type="ChEBI" id="CHEBI:57844"/>
    </ligand>
</feature>
<feature type="binding site" evidence="1">
    <location>
        <position position="550"/>
    </location>
    <ligand>
        <name>5-methyltetrahydropteroyltri-L-glutamate</name>
        <dbReference type="ChEBI" id="CHEBI:58207"/>
    </ligand>
</feature>
<feature type="binding site" evidence="1">
    <location>
        <position position="588"/>
    </location>
    <ligand>
        <name>L-homocysteine</name>
        <dbReference type="ChEBI" id="CHEBI:58199"/>
    </ligand>
</feature>
<feature type="binding site" evidence="1">
    <location>
        <position position="588"/>
    </location>
    <ligand>
        <name>L-methionine</name>
        <dbReference type="ChEBI" id="CHEBI:57844"/>
    </ligand>
</feature>
<feature type="binding site" evidence="1">
    <location>
        <position position="594"/>
    </location>
    <ligand>
        <name>5-methyltetrahydropteroyltri-L-glutamate</name>
        <dbReference type="ChEBI" id="CHEBI:58207"/>
    </ligand>
</feature>
<feature type="binding site" evidence="1">
    <location>
        <position position="630"/>
    </location>
    <ligand>
        <name>Zn(2+)</name>
        <dbReference type="ChEBI" id="CHEBI:29105"/>
        <note>catalytic</note>
    </ligand>
</feature>
<feature type="binding site" evidence="1">
    <location>
        <position position="632"/>
    </location>
    <ligand>
        <name>Zn(2+)</name>
        <dbReference type="ChEBI" id="CHEBI:29105"/>
        <note>catalytic</note>
    </ligand>
</feature>
<feature type="binding site" evidence="1">
    <location>
        <position position="654"/>
    </location>
    <ligand>
        <name>Zn(2+)</name>
        <dbReference type="ChEBI" id="CHEBI:29105"/>
        <note>catalytic</note>
    </ligand>
</feature>
<feature type="binding site" evidence="1">
    <location>
        <position position="715"/>
    </location>
    <ligand>
        <name>Zn(2+)</name>
        <dbReference type="ChEBI" id="CHEBI:29105"/>
        <note>catalytic</note>
    </ligand>
</feature>
<sequence length="742" mass="85042">MTTIKTSNLGFPRLGRKREWKKAIESYWAKKISKEELDQTLTDLHKENLLLQKYYHLDSIPVGDFSLYDHILDTSLLFNIIPERFQGRTIDDDLLFDIARGNKDHVASALIKWFNTNYHYIVPEWDNVEPKVSRNVLLDRFKYAQSLNVNAHPVIVGPITFVKLSKGGHQTFEEKVKTLLPLYKEVFESLIDAGAEYIQVDEPILVTDDSESYENITREAYDYFEKAGVAKKLVIQTYFERAHLKFLSSLPVGGLGLDFVHDNGYNLKQIEAGDFDKSKTLYAGIIDGRNVWASDIEAKKVLIDKLLAHTNELVIQPSSSLLHVPVSLDDETLDTSVGEGLSFATEKLDELDALRRLLNQNDSVKYDKLKARYERFQNQSFKNLDYDFESVRTSRQSPFAQRIEQQQKRLNLPDLPTTTIGSFPQSREVRKYRADWKNKRITDEAYETFLKNEIARWIKIQEDIGLDVLVHGEFERNDMVEFFGEKLQGFLVTKFGWVQSYGSRAVKPPIIYGDVKWTAPLTVDETVYAQSLTDKPVKGMLTGPVTILNWSFERVDLPRKVVQDQIALAINEEVLALEAAGIKVIQVDEPALREGLPLRSEYHEQYLKDAVLSFKLATSSVRDETQIHTHMCYSQFGQIIHAIHDLDADVISIETSRSHGDLIKDFEDINYDLGIGLGVYDIHSPRIPTKEEITTAINRSLQQIDRSLFWVNPDCGLKTRKEEEVKDALTVLVNAVKAKRQE</sequence>
<keyword id="KW-0028">Amino-acid biosynthesis</keyword>
<keyword id="KW-0479">Metal-binding</keyword>
<keyword id="KW-0486">Methionine biosynthesis</keyword>
<keyword id="KW-0489">Methyltransferase</keyword>
<keyword id="KW-0677">Repeat</keyword>
<keyword id="KW-0808">Transferase</keyword>
<keyword id="KW-0862">Zinc</keyword>
<accession>A7WY46</accession>
<evidence type="ECO:0000255" key="1">
    <source>
        <dbReference type="HAMAP-Rule" id="MF_00172"/>
    </source>
</evidence>
<gene>
    <name evidence="1" type="primary">metE</name>
    <name type="ordered locus">SAHV_0353</name>
</gene>
<proteinExistence type="inferred from homology"/>
<organism>
    <name type="scientific">Staphylococcus aureus (strain Mu3 / ATCC 700698)</name>
    <dbReference type="NCBI Taxonomy" id="418127"/>
    <lineage>
        <taxon>Bacteria</taxon>
        <taxon>Bacillati</taxon>
        <taxon>Bacillota</taxon>
        <taxon>Bacilli</taxon>
        <taxon>Bacillales</taxon>
        <taxon>Staphylococcaceae</taxon>
        <taxon>Staphylococcus</taxon>
    </lineage>
</organism>
<reference key="1">
    <citation type="journal article" date="2008" name="Antimicrob. Agents Chemother.">
        <title>Mutated response regulator graR is responsible for phenotypic conversion of Staphylococcus aureus from heterogeneous vancomycin-intermediate resistance to vancomycin-intermediate resistance.</title>
        <authorList>
            <person name="Neoh H.-M."/>
            <person name="Cui L."/>
            <person name="Yuzawa H."/>
            <person name="Takeuchi F."/>
            <person name="Matsuo M."/>
            <person name="Hiramatsu K."/>
        </authorList>
    </citation>
    <scope>NUCLEOTIDE SEQUENCE [LARGE SCALE GENOMIC DNA]</scope>
    <source>
        <strain>Mu3 / ATCC 700698</strain>
    </source>
</reference>
<name>METE_STAA1</name>